<evidence type="ECO:0000250" key="1"/>
<evidence type="ECO:0000255" key="2"/>
<evidence type="ECO:0000256" key="3">
    <source>
        <dbReference type="SAM" id="MobiDB-lite"/>
    </source>
</evidence>
<evidence type="ECO:0000305" key="4"/>
<protein>
    <recommendedName>
        <fullName>Probable vesicular acetylcholine transporter-B</fullName>
        <shortName>VAChT-B</shortName>
    </recommendedName>
    <alternativeName>
        <fullName>Solute carrier family 18 member 3-B</fullName>
    </alternativeName>
</protein>
<reference key="1">
    <citation type="submission" date="2003-07" db="EMBL/GenBank/DDBJ databases">
        <authorList>
            <consortium name="NIH - Zebrafish Gene Collection (ZGC) project"/>
        </authorList>
    </citation>
    <scope>NUCLEOTIDE SEQUENCE [LARGE SCALE MRNA]</scope>
    <source>
        <tissue>Embryo</tissue>
    </source>
</reference>
<dbReference type="EMBL" id="BC054646">
    <property type="protein sequence ID" value="AAH54646.1"/>
    <property type="molecule type" value="mRNA"/>
</dbReference>
<dbReference type="RefSeq" id="NP_957401.1">
    <property type="nucleotide sequence ID" value="NM_201107.1"/>
</dbReference>
<dbReference type="SMR" id="P59845"/>
<dbReference type="FunCoup" id="P59845">
    <property type="interactions" value="14"/>
</dbReference>
<dbReference type="STRING" id="7955.ENSDARP00000152016"/>
<dbReference type="GlyCosmos" id="P59845">
    <property type="glycosylation" value="1 site, No reported glycans"/>
</dbReference>
<dbReference type="GeneID" id="394082"/>
<dbReference type="KEGG" id="dre:394082"/>
<dbReference type="AGR" id="ZFIN:ZDB-GENE-040426-1410"/>
<dbReference type="CTD" id="394082"/>
<dbReference type="ZFIN" id="ZDB-GENE-040426-1410">
    <property type="gene designation" value="slc18a3b"/>
</dbReference>
<dbReference type="InParanoid" id="P59845"/>
<dbReference type="OrthoDB" id="5086884at2759"/>
<dbReference type="PhylomeDB" id="P59845"/>
<dbReference type="PRO" id="PR:P59845"/>
<dbReference type="Proteomes" id="UP000000437">
    <property type="component" value="Chromosome 12"/>
</dbReference>
<dbReference type="GO" id="GO:0030121">
    <property type="term" value="C:AP-1 adaptor complex"/>
    <property type="evidence" value="ECO:0000318"/>
    <property type="project" value="GO_Central"/>
</dbReference>
<dbReference type="GO" id="GO:0030122">
    <property type="term" value="C:AP-2 adaptor complex"/>
    <property type="evidence" value="ECO:0000318"/>
    <property type="project" value="GO_Central"/>
</dbReference>
<dbReference type="GO" id="GO:0043195">
    <property type="term" value="C:terminal bouton"/>
    <property type="evidence" value="ECO:0000318"/>
    <property type="project" value="GO_Central"/>
</dbReference>
<dbReference type="GO" id="GO:0005277">
    <property type="term" value="F:acetylcholine transmembrane transporter activity"/>
    <property type="evidence" value="ECO:0000318"/>
    <property type="project" value="GO_Central"/>
</dbReference>
<dbReference type="GO" id="GO:0042910">
    <property type="term" value="F:xenobiotic transmembrane transporter activity"/>
    <property type="evidence" value="ECO:0007669"/>
    <property type="project" value="InterPro"/>
</dbReference>
<dbReference type="GO" id="GO:0007268">
    <property type="term" value="P:chemical synaptic transmission"/>
    <property type="evidence" value="ECO:0000318"/>
    <property type="project" value="GO_Central"/>
</dbReference>
<dbReference type="GO" id="GO:0051649">
    <property type="term" value="P:establishment of localization in cell"/>
    <property type="evidence" value="ECO:0007669"/>
    <property type="project" value="UniProtKB-ARBA"/>
</dbReference>
<dbReference type="GO" id="GO:0006837">
    <property type="term" value="P:serotonin transport"/>
    <property type="evidence" value="ECO:0007669"/>
    <property type="project" value="UniProtKB-ARBA"/>
</dbReference>
<dbReference type="CDD" id="cd17383">
    <property type="entry name" value="MFS_SLC18A3_VAChT"/>
    <property type="match status" value="1"/>
</dbReference>
<dbReference type="FunFam" id="1.20.1250.20:FF:000109">
    <property type="entry name" value="Putative vesicular acetylcholine transporter"/>
    <property type="match status" value="1"/>
</dbReference>
<dbReference type="Gene3D" id="1.20.1250.20">
    <property type="entry name" value="MFS general substrate transporter like domains"/>
    <property type="match status" value="1"/>
</dbReference>
<dbReference type="InterPro" id="IPR011701">
    <property type="entry name" value="MFS"/>
</dbReference>
<dbReference type="InterPro" id="IPR020846">
    <property type="entry name" value="MFS_dom"/>
</dbReference>
<dbReference type="InterPro" id="IPR036259">
    <property type="entry name" value="MFS_trans_sf"/>
</dbReference>
<dbReference type="InterPro" id="IPR050930">
    <property type="entry name" value="MFS_Vesicular_Transporter"/>
</dbReference>
<dbReference type="InterPro" id="IPR004734">
    <property type="entry name" value="Multidrug-R"/>
</dbReference>
<dbReference type="NCBIfam" id="TIGR00880">
    <property type="entry name" value="2_A_01_02"/>
    <property type="match status" value="1"/>
</dbReference>
<dbReference type="PANTHER" id="PTHR23506">
    <property type="entry name" value="GH10249P"/>
    <property type="match status" value="1"/>
</dbReference>
<dbReference type="PANTHER" id="PTHR23506:SF13">
    <property type="entry name" value="VESICULAR ACETYLCHOLINE TRANSPORTER"/>
    <property type="match status" value="1"/>
</dbReference>
<dbReference type="Pfam" id="PF07690">
    <property type="entry name" value="MFS_1"/>
    <property type="match status" value="1"/>
</dbReference>
<dbReference type="SUPFAM" id="SSF103473">
    <property type="entry name" value="MFS general substrate transporter"/>
    <property type="match status" value="1"/>
</dbReference>
<dbReference type="PROSITE" id="PS50850">
    <property type="entry name" value="MFS"/>
    <property type="match status" value="1"/>
</dbReference>
<accession>P59845</accession>
<gene>
    <name type="primary">slc18a3b</name>
    <name type="synonym">slc18a3</name>
    <name type="synonym">vacht</name>
    <name type="ORF">zgc:64220</name>
</gene>
<organism>
    <name type="scientific">Danio rerio</name>
    <name type="common">Zebrafish</name>
    <name type="synonym">Brachydanio rerio</name>
    <dbReference type="NCBI Taxonomy" id="7955"/>
    <lineage>
        <taxon>Eukaryota</taxon>
        <taxon>Metazoa</taxon>
        <taxon>Chordata</taxon>
        <taxon>Craniata</taxon>
        <taxon>Vertebrata</taxon>
        <taxon>Euteleostomi</taxon>
        <taxon>Actinopterygii</taxon>
        <taxon>Neopterygii</taxon>
        <taxon>Teleostei</taxon>
        <taxon>Ostariophysi</taxon>
        <taxon>Cypriniformes</taxon>
        <taxon>Danionidae</taxon>
        <taxon>Danioninae</taxon>
        <taxon>Danio</taxon>
    </lineage>
</organism>
<sequence>MQSTGAPGLAQSAVLQLSAMGERSRELGGALREPERKRRLLLVVVCVALLLDNMLYMVIVPIIPDYLADLRGERGNSSADLDIQIGVLFASKALLQLLVNPLSGTFIDRVGYDLPLLIGLLVMFLSTCIFAFAENYGTLFAARSLQGLGSAFADTSGIAMIADKFTEEAERSRALGIALAFISFGSLVAPPFGGILYEFAGKRVPFIVLACVCLADGVLLLTVVKPFSDRTRENMPVGTPIHRLMVDPYIAVVAGALTVCNIPLAFLEPTIANWMESTMDASKWQMGLVWLPAFLPHVLGVYITVRLAARYPERQWFYGALGMVIIGASSCTVPACKTFGELVFPLCGICFGIALVDTALLPTLAFLVDVRHVSVYGSVYAIADISYSVAYAMGPVVAGQIVHNLGFVQLNLGMGLVNVLYAPALLLLRPVCQIKPSFSERNVLLEEGPSGLYDSIRLEERALRRKGLSAGAGTEHGLRGRSEEEEESGPESA</sequence>
<feature type="chain" id="PRO_0000127521" description="Probable vesicular acetylcholine transporter-B">
    <location>
        <begin position="1"/>
        <end position="493"/>
    </location>
</feature>
<feature type="topological domain" description="Cytoplasmic" evidence="2">
    <location>
        <begin position="1"/>
        <end position="39"/>
    </location>
</feature>
<feature type="transmembrane region" description="Helical" evidence="2">
    <location>
        <begin position="40"/>
        <end position="60"/>
    </location>
</feature>
<feature type="topological domain" description="Lumenal, vesicle" evidence="2">
    <location>
        <begin position="61"/>
        <end position="86"/>
    </location>
</feature>
<feature type="transmembrane region" description="Helical" evidence="2">
    <location>
        <begin position="87"/>
        <end position="107"/>
    </location>
</feature>
<feature type="topological domain" description="Cytoplasmic" evidence="2">
    <location>
        <begin position="108"/>
        <end position="113"/>
    </location>
</feature>
<feature type="transmembrane region" description="Helical" evidence="2">
    <location>
        <begin position="114"/>
        <end position="134"/>
    </location>
</feature>
<feature type="topological domain" description="Lumenal, vesicle" evidence="2">
    <location>
        <begin position="135"/>
        <end position="143"/>
    </location>
</feature>
<feature type="transmembrane region" description="Helical" evidence="2">
    <location>
        <begin position="144"/>
        <end position="164"/>
    </location>
</feature>
<feature type="topological domain" description="Cytoplasmic" evidence="2">
    <location>
        <begin position="165"/>
        <end position="174"/>
    </location>
</feature>
<feature type="transmembrane region" description="Helical" evidence="2">
    <location>
        <begin position="175"/>
        <end position="195"/>
    </location>
</feature>
<feature type="topological domain" description="Lumenal, vesicle" evidence="2">
    <location>
        <begin position="196"/>
        <end position="203"/>
    </location>
</feature>
<feature type="transmembrane region" description="Helical" evidence="2">
    <location>
        <begin position="204"/>
        <end position="224"/>
    </location>
</feature>
<feature type="topological domain" description="Cytoplasmic" evidence="2">
    <location>
        <begin position="225"/>
        <end position="247"/>
    </location>
</feature>
<feature type="transmembrane region" description="Helical" evidence="2">
    <location>
        <begin position="248"/>
        <end position="268"/>
    </location>
</feature>
<feature type="topological domain" description="Lumenal, vesicle" evidence="2">
    <location>
        <begin position="269"/>
        <end position="284"/>
    </location>
</feature>
<feature type="transmembrane region" description="Helical" evidence="2">
    <location>
        <begin position="285"/>
        <end position="305"/>
    </location>
</feature>
<feature type="topological domain" description="Cytoplasmic" evidence="2">
    <location>
        <begin position="306"/>
        <end position="315"/>
    </location>
</feature>
<feature type="transmembrane region" description="Helical" evidence="2">
    <location>
        <begin position="316"/>
        <end position="336"/>
    </location>
</feature>
<feature type="topological domain" description="Lumenal, vesicle" evidence="2">
    <location>
        <begin position="337"/>
        <end position="347"/>
    </location>
</feature>
<feature type="transmembrane region" description="Helical" evidence="2">
    <location>
        <begin position="348"/>
        <end position="368"/>
    </location>
</feature>
<feature type="topological domain" description="Cytoplasmic" evidence="2">
    <location>
        <begin position="369"/>
        <end position="378"/>
    </location>
</feature>
<feature type="transmembrane region" description="Helical" evidence="2">
    <location>
        <begin position="379"/>
        <end position="399"/>
    </location>
</feature>
<feature type="topological domain" description="Lumenal, vesicle" evidence="2">
    <location>
        <begin position="400"/>
        <end position="406"/>
    </location>
</feature>
<feature type="transmembrane region" description="Helical" evidence="2">
    <location>
        <begin position="407"/>
        <end position="427"/>
    </location>
</feature>
<feature type="topological domain" description="Cytoplasmic" evidence="2">
    <location>
        <begin position="428"/>
        <end position="493"/>
    </location>
</feature>
<feature type="region of interest" description="Disordered" evidence="3">
    <location>
        <begin position="467"/>
        <end position="493"/>
    </location>
</feature>
<feature type="compositionally biased region" description="Acidic residues" evidence="3">
    <location>
        <begin position="483"/>
        <end position="493"/>
    </location>
</feature>
<feature type="glycosylation site" description="N-linked (GlcNAc...) asparagine" evidence="2">
    <location>
        <position position="76"/>
    </location>
</feature>
<keyword id="KW-0325">Glycoprotein</keyword>
<keyword id="KW-0472">Membrane</keyword>
<keyword id="KW-0532">Neurotransmitter transport</keyword>
<keyword id="KW-1185">Reference proteome</keyword>
<keyword id="KW-0812">Transmembrane</keyword>
<keyword id="KW-1133">Transmembrane helix</keyword>
<keyword id="KW-0813">Transport</keyword>
<comment type="function">
    <text evidence="1">Involved in acetylcholine transport into synaptic vesicles.</text>
</comment>
<comment type="subcellular location">
    <subcellularLocation>
        <location>Membrane</location>
        <topology>Multi-pass membrane protein</topology>
    </subcellularLocation>
</comment>
<comment type="similarity">
    <text evidence="4">Belongs to the major facilitator superfamily. Vesicular transporter family.</text>
</comment>
<proteinExistence type="evidence at transcript level"/>
<name>VACHB_DANRE</name>